<dbReference type="EMBL" id="Y13228">
    <property type="protein sequence ID" value="CAA73671.1"/>
    <property type="molecule type" value="Genomic_DNA"/>
</dbReference>
<dbReference type="EMBL" id="LT708304">
    <property type="protein sequence ID" value="SIT99319.1"/>
    <property type="molecule type" value="Genomic_DNA"/>
</dbReference>
<dbReference type="RefSeq" id="NP_854378.1">
    <property type="nucleotide sequence ID" value="NC_002945.3"/>
</dbReference>
<dbReference type="RefSeq" id="WP_003403578.1">
    <property type="nucleotide sequence ID" value="NC_002945.4"/>
</dbReference>
<dbReference type="SMR" id="P0A5X1"/>
<dbReference type="GeneID" id="93438601"/>
<dbReference type="KEGG" id="mbo:BQ2027_MB0720"/>
<dbReference type="PATRIC" id="fig|233413.5.peg.786"/>
<dbReference type="Proteomes" id="UP000001419">
    <property type="component" value="Chromosome"/>
</dbReference>
<dbReference type="GO" id="GO:1990904">
    <property type="term" value="C:ribonucleoprotein complex"/>
    <property type="evidence" value="ECO:0007669"/>
    <property type="project" value="UniProtKB-KW"/>
</dbReference>
<dbReference type="GO" id="GO:0005840">
    <property type="term" value="C:ribosome"/>
    <property type="evidence" value="ECO:0007669"/>
    <property type="project" value="UniProtKB-KW"/>
</dbReference>
<dbReference type="GO" id="GO:0003735">
    <property type="term" value="F:structural constituent of ribosome"/>
    <property type="evidence" value="ECO:0007669"/>
    <property type="project" value="InterPro"/>
</dbReference>
<dbReference type="GO" id="GO:0000049">
    <property type="term" value="F:tRNA binding"/>
    <property type="evidence" value="ECO:0007669"/>
    <property type="project" value="UniProtKB-UniRule"/>
</dbReference>
<dbReference type="GO" id="GO:0006412">
    <property type="term" value="P:translation"/>
    <property type="evidence" value="ECO:0007669"/>
    <property type="project" value="UniProtKB-UniRule"/>
</dbReference>
<dbReference type="FunFam" id="3.30.70.600:FF:000001">
    <property type="entry name" value="30S ribosomal protein S10"/>
    <property type="match status" value="1"/>
</dbReference>
<dbReference type="Gene3D" id="3.30.70.600">
    <property type="entry name" value="Ribosomal protein S10 domain"/>
    <property type="match status" value="1"/>
</dbReference>
<dbReference type="HAMAP" id="MF_00508">
    <property type="entry name" value="Ribosomal_uS10"/>
    <property type="match status" value="1"/>
</dbReference>
<dbReference type="InterPro" id="IPR001848">
    <property type="entry name" value="Ribosomal_uS10"/>
</dbReference>
<dbReference type="InterPro" id="IPR018268">
    <property type="entry name" value="Ribosomal_uS10_CS"/>
</dbReference>
<dbReference type="InterPro" id="IPR027486">
    <property type="entry name" value="Ribosomal_uS10_dom"/>
</dbReference>
<dbReference type="InterPro" id="IPR036838">
    <property type="entry name" value="Ribosomal_uS10_dom_sf"/>
</dbReference>
<dbReference type="NCBIfam" id="NF001861">
    <property type="entry name" value="PRK00596.1"/>
    <property type="match status" value="1"/>
</dbReference>
<dbReference type="NCBIfam" id="TIGR01049">
    <property type="entry name" value="rpsJ_bact"/>
    <property type="match status" value="1"/>
</dbReference>
<dbReference type="PANTHER" id="PTHR11700">
    <property type="entry name" value="30S RIBOSOMAL PROTEIN S10 FAMILY MEMBER"/>
    <property type="match status" value="1"/>
</dbReference>
<dbReference type="Pfam" id="PF00338">
    <property type="entry name" value="Ribosomal_S10"/>
    <property type="match status" value="1"/>
</dbReference>
<dbReference type="PRINTS" id="PR00971">
    <property type="entry name" value="RIBOSOMALS10"/>
</dbReference>
<dbReference type="SMART" id="SM01403">
    <property type="entry name" value="Ribosomal_S10"/>
    <property type="match status" value="1"/>
</dbReference>
<dbReference type="SUPFAM" id="SSF54999">
    <property type="entry name" value="Ribosomal protein S10"/>
    <property type="match status" value="1"/>
</dbReference>
<dbReference type="PROSITE" id="PS00361">
    <property type="entry name" value="RIBOSOMAL_S10"/>
    <property type="match status" value="1"/>
</dbReference>
<accession>P0A5X1</accession>
<accession>A0A1R3XW51</accession>
<accession>O08117</accession>
<accession>P95048</accession>
<accession>X2BFX5</accession>
<name>RS10_MYCBO</name>
<organism>
    <name type="scientific">Mycobacterium bovis (strain ATCC BAA-935 / AF2122/97)</name>
    <dbReference type="NCBI Taxonomy" id="233413"/>
    <lineage>
        <taxon>Bacteria</taxon>
        <taxon>Bacillati</taxon>
        <taxon>Actinomycetota</taxon>
        <taxon>Actinomycetes</taxon>
        <taxon>Mycobacteriales</taxon>
        <taxon>Mycobacteriaceae</taxon>
        <taxon>Mycobacterium</taxon>
        <taxon>Mycobacterium tuberculosis complex</taxon>
    </lineage>
</organism>
<comment type="function">
    <text evidence="1">Involved in the binding of tRNA to the ribosomes.</text>
</comment>
<comment type="subunit">
    <text evidence="1">Part of the 30S ribosomal subunit.</text>
</comment>
<comment type="similarity">
    <text evidence="1">Belongs to the universal ribosomal protein uS10 family.</text>
</comment>
<feature type="chain" id="PRO_0000146561" description="Small ribosomal subunit protein uS10">
    <location>
        <begin position="1"/>
        <end position="101"/>
    </location>
</feature>
<keyword id="KW-1185">Reference proteome</keyword>
<keyword id="KW-0687">Ribonucleoprotein</keyword>
<keyword id="KW-0689">Ribosomal protein</keyword>
<proteinExistence type="inferred from homology"/>
<protein>
    <recommendedName>
        <fullName evidence="1">Small ribosomal subunit protein uS10</fullName>
    </recommendedName>
    <alternativeName>
        <fullName evidence="2">30S ribosomal protein S10</fullName>
    </alternativeName>
</protein>
<evidence type="ECO:0000255" key="1">
    <source>
        <dbReference type="HAMAP-Rule" id="MF_00508"/>
    </source>
</evidence>
<evidence type="ECO:0000305" key="2"/>
<reference key="1">
    <citation type="journal article" date="1997" name="Mol. Microbiol.">
        <title>The role of ribosomal RNAs in macrolide resistance.</title>
        <authorList>
            <person name="Sander P."/>
            <person name="Prammananan T."/>
            <person name="Meier A."/>
            <person name="Frischkorn K."/>
            <person name="Boettger E.C."/>
        </authorList>
    </citation>
    <scope>NUCLEOTIDE SEQUENCE [GENOMIC DNA]</scope>
    <source>
        <strain>BCG</strain>
    </source>
</reference>
<reference key="2">
    <citation type="journal article" date="2003" name="Proc. Natl. Acad. Sci. U.S.A.">
        <title>The complete genome sequence of Mycobacterium bovis.</title>
        <authorList>
            <person name="Garnier T."/>
            <person name="Eiglmeier K."/>
            <person name="Camus J.-C."/>
            <person name="Medina N."/>
            <person name="Mansoor H."/>
            <person name="Pryor M."/>
            <person name="Duthoy S."/>
            <person name="Grondin S."/>
            <person name="Lacroix C."/>
            <person name="Monsempe C."/>
            <person name="Simon S."/>
            <person name="Harris B."/>
            <person name="Atkin R."/>
            <person name="Doggett J."/>
            <person name="Mayes R."/>
            <person name="Keating L."/>
            <person name="Wheeler P.R."/>
            <person name="Parkhill J."/>
            <person name="Barrell B.G."/>
            <person name="Cole S.T."/>
            <person name="Gordon S.V."/>
            <person name="Hewinson R.G."/>
        </authorList>
    </citation>
    <scope>NUCLEOTIDE SEQUENCE [LARGE SCALE GENOMIC DNA]</scope>
    <source>
        <strain>ATCC BAA-935 / AF2122/97</strain>
    </source>
</reference>
<reference key="3">
    <citation type="journal article" date="2017" name="Genome Announc.">
        <title>Updated reference genome sequence and annotation of Mycobacterium bovis AF2122/97.</title>
        <authorList>
            <person name="Malone K.M."/>
            <person name="Farrell D."/>
            <person name="Stuber T.P."/>
            <person name="Schubert O.T."/>
            <person name="Aebersold R."/>
            <person name="Robbe-Austerman S."/>
            <person name="Gordon S.V."/>
        </authorList>
    </citation>
    <scope>NUCLEOTIDE SEQUENCE [LARGE SCALE GENOMIC DNA]</scope>
    <scope>GENOME REANNOTATION</scope>
    <source>
        <strain>ATCC BAA-935 / AF2122/97</strain>
    </source>
</reference>
<gene>
    <name evidence="1" type="primary">rpsJ</name>
    <name type="synonym">rpsX</name>
    <name type="ordered locus">BQ2027_MB0720</name>
</gene>
<sequence>MAGQKIRIRLKAYDHEAIDASARKIVETVVRTGASVVGPVPLPTEKNVYCVIRSPHKYKDSREHFEMRTHKRLIDIIDPTPKTVDALMRIDLPASVDVNIQ</sequence>